<sequence>MSIPRVGVLALQGDTREHLAALGEAGAEPMTVRRRSELDAVDGLVIPGGESTTISHLLCGFDLLEPLRARLAAGLPAYGACAGMIMLASEILDAGVRGRQALPLRGIDMTVRRNAFGRQVDSFEGDIAFTGLDHPVRAVFIRAPWVERVGAGVTVLARAGDHIVAVREGSVLATAFHPEVTGDRSIHRLFVDIVNGKA</sequence>
<gene>
    <name evidence="1" type="primary">pdxT</name>
    <name type="synonym">snoP</name>
    <name type="ordered locus">MUL_3248</name>
</gene>
<organism>
    <name type="scientific">Mycobacterium ulcerans (strain Agy99)</name>
    <dbReference type="NCBI Taxonomy" id="362242"/>
    <lineage>
        <taxon>Bacteria</taxon>
        <taxon>Bacillati</taxon>
        <taxon>Actinomycetota</taxon>
        <taxon>Actinomycetes</taxon>
        <taxon>Mycobacteriales</taxon>
        <taxon>Mycobacteriaceae</taxon>
        <taxon>Mycobacterium</taxon>
        <taxon>Mycobacterium ulcerans group</taxon>
    </lineage>
</organism>
<feature type="chain" id="PRO_0000293008" description="Pyridoxal 5'-phosphate synthase subunit PdxT">
    <location>
        <begin position="1"/>
        <end position="198"/>
    </location>
</feature>
<feature type="active site" description="Nucleophile" evidence="1">
    <location>
        <position position="81"/>
    </location>
</feature>
<feature type="active site" description="Charge relay system" evidence="1">
    <location>
        <position position="177"/>
    </location>
</feature>
<feature type="active site" description="Charge relay system" evidence="1">
    <location>
        <position position="179"/>
    </location>
</feature>
<feature type="binding site" evidence="1">
    <location>
        <begin position="49"/>
        <end position="51"/>
    </location>
    <ligand>
        <name>L-glutamine</name>
        <dbReference type="ChEBI" id="CHEBI:58359"/>
    </ligand>
</feature>
<feature type="binding site" evidence="1">
    <location>
        <position position="113"/>
    </location>
    <ligand>
        <name>L-glutamine</name>
        <dbReference type="ChEBI" id="CHEBI:58359"/>
    </ligand>
</feature>
<feature type="binding site" evidence="1">
    <location>
        <begin position="141"/>
        <end position="142"/>
    </location>
    <ligand>
        <name>L-glutamine</name>
        <dbReference type="ChEBI" id="CHEBI:58359"/>
    </ligand>
</feature>
<reference key="1">
    <citation type="journal article" date="2007" name="Genome Res.">
        <title>Reductive evolution and niche adaptation inferred from the genome of Mycobacterium ulcerans, the causative agent of Buruli ulcer.</title>
        <authorList>
            <person name="Stinear T.P."/>
            <person name="Seemann T."/>
            <person name="Pidot S."/>
            <person name="Frigui W."/>
            <person name="Reysset G."/>
            <person name="Garnier T."/>
            <person name="Meurice G."/>
            <person name="Simon D."/>
            <person name="Bouchier C."/>
            <person name="Ma L."/>
            <person name="Tichit M."/>
            <person name="Porter J.L."/>
            <person name="Ryan J."/>
            <person name="Johnson P.D.R."/>
            <person name="Davies J.K."/>
            <person name="Jenkin G.A."/>
            <person name="Small P.L.C."/>
            <person name="Jones L.M."/>
            <person name="Tekaia F."/>
            <person name="Laval F."/>
            <person name="Daffe M."/>
            <person name="Parkhill J."/>
            <person name="Cole S.T."/>
        </authorList>
    </citation>
    <scope>NUCLEOTIDE SEQUENCE [LARGE SCALE GENOMIC DNA]</scope>
    <source>
        <strain>Agy99</strain>
    </source>
</reference>
<dbReference type="EC" id="4.3.3.6" evidence="1"/>
<dbReference type="EC" id="3.5.1.2" evidence="1"/>
<dbReference type="EMBL" id="CP000325">
    <property type="protein sequence ID" value="ABL05455.1"/>
    <property type="molecule type" value="Genomic_DNA"/>
</dbReference>
<dbReference type="RefSeq" id="WP_011741064.1">
    <property type="nucleotide sequence ID" value="NC_008611.1"/>
</dbReference>
<dbReference type="SMR" id="A0PSY6"/>
<dbReference type="MEROPS" id="C26.A32"/>
<dbReference type="GeneID" id="93437661"/>
<dbReference type="KEGG" id="mul:MUL_3248"/>
<dbReference type="eggNOG" id="COG0311">
    <property type="taxonomic scope" value="Bacteria"/>
</dbReference>
<dbReference type="HOGENOM" id="CLU_069674_2_0_11"/>
<dbReference type="UniPathway" id="UPA00245"/>
<dbReference type="Proteomes" id="UP000000765">
    <property type="component" value="Chromosome"/>
</dbReference>
<dbReference type="GO" id="GO:0005829">
    <property type="term" value="C:cytosol"/>
    <property type="evidence" value="ECO:0007669"/>
    <property type="project" value="TreeGrafter"/>
</dbReference>
<dbReference type="GO" id="GO:1903600">
    <property type="term" value="C:glutaminase complex"/>
    <property type="evidence" value="ECO:0007669"/>
    <property type="project" value="TreeGrafter"/>
</dbReference>
<dbReference type="GO" id="GO:0004359">
    <property type="term" value="F:glutaminase activity"/>
    <property type="evidence" value="ECO:0007669"/>
    <property type="project" value="UniProtKB-UniRule"/>
</dbReference>
<dbReference type="GO" id="GO:0036381">
    <property type="term" value="F:pyridoxal 5'-phosphate synthase (glutamine hydrolysing) activity"/>
    <property type="evidence" value="ECO:0007669"/>
    <property type="project" value="UniProtKB-UniRule"/>
</dbReference>
<dbReference type="GO" id="GO:0006543">
    <property type="term" value="P:glutamine catabolic process"/>
    <property type="evidence" value="ECO:0007669"/>
    <property type="project" value="UniProtKB-UniRule"/>
</dbReference>
<dbReference type="GO" id="GO:0042823">
    <property type="term" value="P:pyridoxal phosphate biosynthetic process"/>
    <property type="evidence" value="ECO:0007669"/>
    <property type="project" value="UniProtKB-UniRule"/>
</dbReference>
<dbReference type="GO" id="GO:0008614">
    <property type="term" value="P:pyridoxine metabolic process"/>
    <property type="evidence" value="ECO:0007669"/>
    <property type="project" value="TreeGrafter"/>
</dbReference>
<dbReference type="CDD" id="cd01749">
    <property type="entry name" value="GATase1_PB"/>
    <property type="match status" value="1"/>
</dbReference>
<dbReference type="FunFam" id="3.40.50.880:FF:000010">
    <property type="entry name" value="uncharacterized protein LOC100176842 isoform X2"/>
    <property type="match status" value="1"/>
</dbReference>
<dbReference type="Gene3D" id="3.40.50.880">
    <property type="match status" value="1"/>
</dbReference>
<dbReference type="HAMAP" id="MF_01615">
    <property type="entry name" value="PdxT"/>
    <property type="match status" value="1"/>
</dbReference>
<dbReference type="InterPro" id="IPR029062">
    <property type="entry name" value="Class_I_gatase-like"/>
</dbReference>
<dbReference type="InterPro" id="IPR002161">
    <property type="entry name" value="PdxT/SNO"/>
</dbReference>
<dbReference type="InterPro" id="IPR021196">
    <property type="entry name" value="PdxT/SNO_CS"/>
</dbReference>
<dbReference type="NCBIfam" id="TIGR03800">
    <property type="entry name" value="PLP_synth_Pdx2"/>
    <property type="match status" value="1"/>
</dbReference>
<dbReference type="PANTHER" id="PTHR31559">
    <property type="entry name" value="PYRIDOXAL 5'-PHOSPHATE SYNTHASE SUBUNIT SNO"/>
    <property type="match status" value="1"/>
</dbReference>
<dbReference type="PANTHER" id="PTHR31559:SF0">
    <property type="entry name" value="PYRIDOXAL 5'-PHOSPHATE SYNTHASE SUBUNIT SNO1-RELATED"/>
    <property type="match status" value="1"/>
</dbReference>
<dbReference type="Pfam" id="PF01174">
    <property type="entry name" value="SNO"/>
    <property type="match status" value="1"/>
</dbReference>
<dbReference type="PIRSF" id="PIRSF005639">
    <property type="entry name" value="Glut_amidoT_SNO"/>
    <property type="match status" value="1"/>
</dbReference>
<dbReference type="SUPFAM" id="SSF52317">
    <property type="entry name" value="Class I glutamine amidotransferase-like"/>
    <property type="match status" value="1"/>
</dbReference>
<dbReference type="PROSITE" id="PS01236">
    <property type="entry name" value="PDXT_SNO_1"/>
    <property type="match status" value="1"/>
</dbReference>
<dbReference type="PROSITE" id="PS51130">
    <property type="entry name" value="PDXT_SNO_2"/>
    <property type="match status" value="1"/>
</dbReference>
<name>PDXT_MYCUA</name>
<proteinExistence type="inferred from homology"/>
<accession>A0PSY6</accession>
<keyword id="KW-0315">Glutamine amidotransferase</keyword>
<keyword id="KW-0378">Hydrolase</keyword>
<keyword id="KW-0456">Lyase</keyword>
<keyword id="KW-0663">Pyridoxal phosphate</keyword>
<protein>
    <recommendedName>
        <fullName evidence="1">Pyridoxal 5'-phosphate synthase subunit PdxT</fullName>
        <ecNumber evidence="1">4.3.3.6</ecNumber>
    </recommendedName>
    <alternativeName>
        <fullName evidence="1">Pdx2</fullName>
    </alternativeName>
    <alternativeName>
        <fullName evidence="1">Pyridoxal 5'-phosphate synthase glutaminase subunit</fullName>
        <ecNumber evidence="1">3.5.1.2</ecNumber>
    </alternativeName>
</protein>
<comment type="function">
    <text evidence="1">Catalyzes the hydrolysis of glutamine to glutamate and ammonia as part of the biosynthesis of pyridoxal 5'-phosphate. The resulting ammonia molecule is channeled to the active site of PdxS.</text>
</comment>
<comment type="catalytic activity">
    <reaction evidence="1">
        <text>aldehydo-D-ribose 5-phosphate + D-glyceraldehyde 3-phosphate + L-glutamine = pyridoxal 5'-phosphate + L-glutamate + phosphate + 3 H2O + H(+)</text>
        <dbReference type="Rhea" id="RHEA:31507"/>
        <dbReference type="ChEBI" id="CHEBI:15377"/>
        <dbReference type="ChEBI" id="CHEBI:15378"/>
        <dbReference type="ChEBI" id="CHEBI:29985"/>
        <dbReference type="ChEBI" id="CHEBI:43474"/>
        <dbReference type="ChEBI" id="CHEBI:58273"/>
        <dbReference type="ChEBI" id="CHEBI:58359"/>
        <dbReference type="ChEBI" id="CHEBI:59776"/>
        <dbReference type="ChEBI" id="CHEBI:597326"/>
        <dbReference type="EC" id="4.3.3.6"/>
    </reaction>
</comment>
<comment type="catalytic activity">
    <reaction evidence="1">
        <text>L-glutamine + H2O = L-glutamate + NH4(+)</text>
        <dbReference type="Rhea" id="RHEA:15889"/>
        <dbReference type="ChEBI" id="CHEBI:15377"/>
        <dbReference type="ChEBI" id="CHEBI:28938"/>
        <dbReference type="ChEBI" id="CHEBI:29985"/>
        <dbReference type="ChEBI" id="CHEBI:58359"/>
        <dbReference type="EC" id="3.5.1.2"/>
    </reaction>
</comment>
<comment type="pathway">
    <text evidence="1">Cofactor biosynthesis; pyridoxal 5'-phosphate biosynthesis.</text>
</comment>
<comment type="subunit">
    <text evidence="1">In the presence of PdxS, forms a dodecamer of heterodimers. Only shows activity in the heterodimer.</text>
</comment>
<comment type="similarity">
    <text evidence="1">Belongs to the glutaminase PdxT/SNO family.</text>
</comment>
<evidence type="ECO:0000255" key="1">
    <source>
        <dbReference type="HAMAP-Rule" id="MF_01615"/>
    </source>
</evidence>